<keyword id="KW-0687">Ribonucleoprotein</keyword>
<keyword id="KW-0689">Ribosomal protein</keyword>
<keyword id="KW-0694">RNA-binding</keyword>
<keyword id="KW-0699">rRNA-binding</keyword>
<accession>A6V488</accession>
<protein>
    <recommendedName>
        <fullName evidence="1">Large ribosomal subunit protein bL20</fullName>
    </recommendedName>
    <alternativeName>
        <fullName evidence="2">50S ribosomal protein L20</fullName>
    </alternativeName>
</protein>
<reference key="1">
    <citation type="submission" date="2007-06" db="EMBL/GenBank/DDBJ databases">
        <authorList>
            <person name="Dodson R.J."/>
            <person name="Harkins D."/>
            <person name="Paulsen I.T."/>
        </authorList>
    </citation>
    <scope>NUCLEOTIDE SEQUENCE [LARGE SCALE GENOMIC DNA]</scope>
    <source>
        <strain>DSM 24068 / PA7</strain>
    </source>
</reference>
<sequence>MARVKRGVIARRRHKKILKLAKGYYGARSRVFRVAKQAVIKAGQYAYRDRRQRKRQFRALWIARINAGARQNGLSYSRLIAGLKKAAIEIDRKVLADLAVNEKAAFTAIVEKAKASLA</sequence>
<name>RL20_PSEP7</name>
<evidence type="ECO:0000255" key="1">
    <source>
        <dbReference type="HAMAP-Rule" id="MF_00382"/>
    </source>
</evidence>
<evidence type="ECO:0000305" key="2"/>
<gene>
    <name evidence="1" type="primary">rplT</name>
    <name type="ordered locus">PSPA7_2507</name>
</gene>
<organism>
    <name type="scientific">Pseudomonas paraeruginosa (strain DSM 24068 / PA7)</name>
    <name type="common">Pseudomonas aeruginosa (strain PA7)</name>
    <dbReference type="NCBI Taxonomy" id="381754"/>
    <lineage>
        <taxon>Bacteria</taxon>
        <taxon>Pseudomonadati</taxon>
        <taxon>Pseudomonadota</taxon>
        <taxon>Gammaproteobacteria</taxon>
        <taxon>Pseudomonadales</taxon>
        <taxon>Pseudomonadaceae</taxon>
        <taxon>Pseudomonas</taxon>
        <taxon>Pseudomonas paraeruginosa</taxon>
    </lineage>
</organism>
<proteinExistence type="inferred from homology"/>
<dbReference type="EMBL" id="CP000744">
    <property type="protein sequence ID" value="ABR86419.1"/>
    <property type="molecule type" value="Genomic_DNA"/>
</dbReference>
<dbReference type="RefSeq" id="WP_003099086.1">
    <property type="nucleotide sequence ID" value="NC_009656.1"/>
</dbReference>
<dbReference type="SMR" id="A6V488"/>
<dbReference type="GeneID" id="79913049"/>
<dbReference type="KEGG" id="pap:PSPA7_2507"/>
<dbReference type="HOGENOM" id="CLU_123265_0_1_6"/>
<dbReference type="Proteomes" id="UP000001582">
    <property type="component" value="Chromosome"/>
</dbReference>
<dbReference type="GO" id="GO:1990904">
    <property type="term" value="C:ribonucleoprotein complex"/>
    <property type="evidence" value="ECO:0007669"/>
    <property type="project" value="UniProtKB-KW"/>
</dbReference>
<dbReference type="GO" id="GO:0005840">
    <property type="term" value="C:ribosome"/>
    <property type="evidence" value="ECO:0007669"/>
    <property type="project" value="UniProtKB-KW"/>
</dbReference>
<dbReference type="GO" id="GO:0019843">
    <property type="term" value="F:rRNA binding"/>
    <property type="evidence" value="ECO:0007669"/>
    <property type="project" value="UniProtKB-UniRule"/>
</dbReference>
<dbReference type="GO" id="GO:0003735">
    <property type="term" value="F:structural constituent of ribosome"/>
    <property type="evidence" value="ECO:0007669"/>
    <property type="project" value="InterPro"/>
</dbReference>
<dbReference type="GO" id="GO:0000027">
    <property type="term" value="P:ribosomal large subunit assembly"/>
    <property type="evidence" value="ECO:0007669"/>
    <property type="project" value="UniProtKB-UniRule"/>
</dbReference>
<dbReference type="GO" id="GO:0006412">
    <property type="term" value="P:translation"/>
    <property type="evidence" value="ECO:0007669"/>
    <property type="project" value="InterPro"/>
</dbReference>
<dbReference type="CDD" id="cd07026">
    <property type="entry name" value="Ribosomal_L20"/>
    <property type="match status" value="1"/>
</dbReference>
<dbReference type="FunFam" id="1.10.1900.20:FF:000001">
    <property type="entry name" value="50S ribosomal protein L20"/>
    <property type="match status" value="1"/>
</dbReference>
<dbReference type="Gene3D" id="6.10.160.10">
    <property type="match status" value="1"/>
</dbReference>
<dbReference type="Gene3D" id="1.10.1900.20">
    <property type="entry name" value="Ribosomal protein L20"/>
    <property type="match status" value="1"/>
</dbReference>
<dbReference type="HAMAP" id="MF_00382">
    <property type="entry name" value="Ribosomal_bL20"/>
    <property type="match status" value="1"/>
</dbReference>
<dbReference type="InterPro" id="IPR005813">
    <property type="entry name" value="Ribosomal_bL20"/>
</dbReference>
<dbReference type="InterPro" id="IPR049946">
    <property type="entry name" value="RIBOSOMAL_L20_CS"/>
</dbReference>
<dbReference type="InterPro" id="IPR035566">
    <property type="entry name" value="Ribosomal_protein_bL20_C"/>
</dbReference>
<dbReference type="NCBIfam" id="TIGR01032">
    <property type="entry name" value="rplT_bact"/>
    <property type="match status" value="1"/>
</dbReference>
<dbReference type="PANTHER" id="PTHR10986">
    <property type="entry name" value="39S RIBOSOMAL PROTEIN L20"/>
    <property type="match status" value="1"/>
</dbReference>
<dbReference type="Pfam" id="PF00453">
    <property type="entry name" value="Ribosomal_L20"/>
    <property type="match status" value="1"/>
</dbReference>
<dbReference type="PRINTS" id="PR00062">
    <property type="entry name" value="RIBOSOMALL20"/>
</dbReference>
<dbReference type="SUPFAM" id="SSF74731">
    <property type="entry name" value="Ribosomal protein L20"/>
    <property type="match status" value="1"/>
</dbReference>
<dbReference type="PROSITE" id="PS00937">
    <property type="entry name" value="RIBOSOMAL_L20"/>
    <property type="match status" value="1"/>
</dbReference>
<feature type="chain" id="PRO_1000049039" description="Large ribosomal subunit protein bL20">
    <location>
        <begin position="1"/>
        <end position="118"/>
    </location>
</feature>
<comment type="function">
    <text evidence="1">Binds directly to 23S ribosomal RNA and is necessary for the in vitro assembly process of the 50S ribosomal subunit. It is not involved in the protein synthesizing functions of that subunit.</text>
</comment>
<comment type="similarity">
    <text evidence="1">Belongs to the bacterial ribosomal protein bL20 family.</text>
</comment>